<protein>
    <recommendedName>
        <fullName>Mediator of RNA polymerase II transcription subunit 13</fullName>
    </recommendedName>
    <alternativeName>
        <fullName>Lethal protein 19</fullName>
    </alternativeName>
    <alternativeName>
        <fullName>Mediator complex subunit 13</fullName>
    </alternativeName>
</protein>
<dbReference type="EMBL" id="HE601438">
    <property type="protein sequence ID" value="CAP23483.3"/>
    <property type="molecule type" value="Genomic_DNA"/>
</dbReference>
<dbReference type="SMR" id="P0C657"/>
<dbReference type="FunCoup" id="P0C657">
    <property type="interactions" value="2222"/>
</dbReference>
<dbReference type="STRING" id="6238.P0C657"/>
<dbReference type="WormBase" id="CBG03168">
    <property type="protein sequence ID" value="CBP42207"/>
    <property type="gene ID" value="WBGene00026086"/>
    <property type="gene designation" value="Cbr-let-19"/>
</dbReference>
<dbReference type="eggNOG" id="KOG3600">
    <property type="taxonomic scope" value="Eukaryota"/>
</dbReference>
<dbReference type="HOGENOM" id="CLU_226203_0_0_1"/>
<dbReference type="InParanoid" id="P0C657"/>
<dbReference type="OMA" id="GQSAQFC"/>
<dbReference type="Proteomes" id="UP000008549">
    <property type="component" value="Unassembled WGS sequence"/>
</dbReference>
<dbReference type="GO" id="GO:0016592">
    <property type="term" value="C:mediator complex"/>
    <property type="evidence" value="ECO:0000318"/>
    <property type="project" value="GO_Central"/>
</dbReference>
<dbReference type="GO" id="GO:0003713">
    <property type="term" value="F:transcription coactivator activity"/>
    <property type="evidence" value="ECO:0000318"/>
    <property type="project" value="GO_Central"/>
</dbReference>
<dbReference type="GO" id="GO:0045944">
    <property type="term" value="P:positive regulation of transcription by RNA polymerase II"/>
    <property type="evidence" value="ECO:0000318"/>
    <property type="project" value="GO_Central"/>
</dbReference>
<dbReference type="InterPro" id="IPR009401">
    <property type="entry name" value="Med13_C"/>
</dbReference>
<dbReference type="InterPro" id="IPR051139">
    <property type="entry name" value="Mediator_complx_sub13"/>
</dbReference>
<dbReference type="InterPro" id="IPR021643">
    <property type="entry name" value="Mediator_Med13_N"/>
</dbReference>
<dbReference type="InterPro" id="IPR041285">
    <property type="entry name" value="MID_MedPIWI"/>
</dbReference>
<dbReference type="PANTHER" id="PTHR48249">
    <property type="entry name" value="MEDIATOR OF RNA POLYMERASE II TRANSCRIPTION SUBUNIT 13"/>
    <property type="match status" value="1"/>
</dbReference>
<dbReference type="PANTHER" id="PTHR48249:SF3">
    <property type="entry name" value="MEDIATOR OF RNA POLYMERASE II TRANSCRIPTION SUBUNIT 13"/>
    <property type="match status" value="1"/>
</dbReference>
<dbReference type="Pfam" id="PF06333">
    <property type="entry name" value="Med13_C"/>
    <property type="match status" value="1"/>
</dbReference>
<dbReference type="Pfam" id="PF11597">
    <property type="entry name" value="Med13_N"/>
    <property type="match status" value="1"/>
</dbReference>
<dbReference type="Pfam" id="PF18296">
    <property type="entry name" value="MID_MedPIWI"/>
    <property type="match status" value="1"/>
</dbReference>
<sequence>MKATVEGEKDASRKVKVPKRPEVNNGGSLEDCISNVFSLLELPGIKWKCFRPKLNAPRGVPLTSDLVLKAYSRCLTDGILCTWRRKPSPPTGNNELLPPTHFFSNDSPKELWVFWYDAEPTALGKYCEGLDSDEELSSANQMNIVSYEVRTILFKALHVVLERDLTKDGFVRFGRWFTMPLVARDHYLHFMYPSHSPAIRFNFFVHGTSTICASIQAQRQPTLIKLARRHFECKTPKRFPVVIGPWSMRGYLIADQMTLLADQKIQEAAEKEWNQWKEYLQLEEKEPENVTEERQKTPEAEPPAPPQTTRVLLASSSDEDQEKNGGELKSEEVSQKIRWMFEPDLRQDKPKEETAAEKEKRMAAREVRRLRRQRREERRREMEKQRRADDNLEDYDSDVVTDQDEDEAGKEEIVNNDVPKMILIEIDNVRLLYPSKFVCITVEEDRQMLESMGFKCHPMPQELQVPGRRPRNKNVVNMSNPLLSTMAVYQYVQNEKRAEREHFYPRNKPVEIETDTNFEILSNPKARRVAPPKSPTFLSWESQRANHFDTTDIFVNRLFEKLFRLDADTFDENPRLIKFACLSSQFIRRKWKWLHKKQILFCGKARKRFGIGSPQNFALNMMKSREKRKEYQPYHRKRPAKSVKEKKKKAKRKVKKFVRYNSPEQFLASMSRTRKKFNAWKQKKKGPPPKKDLAKKEAAADKDKDKDKEKDKEKDKDNDDDPFVMDKVSQLDWANFSEDETNGNSFADIEEALVSEEHIKFSSLYNPAGGDIEEGDETSNESPDEKTPEGSPNGSPRPKEEIEPFFPITYLAAKPSNIESDLGPDVDDMTEEQFNTEYVPKEYDITQDPKKVKNGQIPISEFSKDNQFYHGEICRLGLRGYKKICAERDREEAARRTKWLQLYRLKVEKRSIKTARQCHRDYLRQIAKRCLRKALRRLRITAKKDALAPPPPKPKPVDPVLKKKEDAKKFEMSLKIMERDLGNLDMSAFCQVREKAGPHGVSFPEIILLTNPKWLKVRSTAGYMKPNYFNSPHGSFDHDSEPEFDEQRTGLGEGTSDQYQDGESVDMIDIERELANDPSSYLSNAEHIRTLGEHIGPDGMLSPPASNEMPKGGPLSVGPASIESQGLNQIYPTPPSVQMLQADASQAHSPSIGGKFRSTANDDIDRAAASGKTIVDIEIEDIETGNMQRWNKIANQSKLSKFLVASRDNPILKGRKTKYDTPATDKFEIRCQVERVTVPMAYESMVTRNFECAPPHTFAELIRQSRTGIKKYTRPLQIQSTLARPPPGATSPLPPPTPMFNPHTLPLHHTSPFSAGPMSHHSMGPPAYPPTPGPYPPTTPTYPGMTPRPGSSYGPGYPNHHQMMPPGYPNQMGQMGGMNGMGGMPGMGPIGMQRQFSNPQMYQHHQMMRMQQMRMQGGLPGYGAPGVPQYPQQSPVSGGPESIRNTDAPNDPTVSKLQSAVSRNGKSDDESDAATSIPTATDDATAATTTAAQLQLQRSQAHQIQHQPNQQTMQSLQLTPEQLQIQQSQQVQAVFQQLPDREKRKYQRRQIQLMNGLMPTSLQPASIKALKNPPDANIPYKRQDIIYNPPNPAHPRGDSLTIAIVLSDTLLDLHFDSVFDACPICSCSVSIRSRDLGMYIIPHAVLSSREIGETNKREYTTGTWSGFHVNSATSCTCGFSAIRHRYLSCCAGLFDEDADEATASEHANAPVIPPLFARNTTKTRDMMWFDPQSVHDLALTDQIRQMAFSNSLGKAVSQMATEKEHRRNITNAVDIGTDITVPTEYVLSHVDTLELMMLGMSALGPMQTPETTGNQFTPQSKYLSYFHPWGFQTANEIAELESSEWVDLLDIITPTLESSMKQARRPSVETPFVIEGPMTWKQVVTKAIRGKPPTDEDEDFSLAEPVPAVMRALEQEAVRAAPNIEQYYDQAELGPVDQPKDVMYITIIPDNDDIYERTVKFMHTMTETYERMRLGRHIPFPVSTGTASRFREVLKTYQHQFPYQEQNQQLVEFTNNRLEAVPQELSNNPDPLNTDPEKWSKRLKRKLELSEELKKADEHPAPPSTQSENSEGNAATPAAETLSSIFSDDAFVEERHINSTEEAPTTTERPPNSLPYRITNWHEKDDDTYEHPPEVHDTLPEGFYEREGILRVGKPLEPLRISHTVVSTREFDNMTQHLSDAQGFVSKLRIFLQQMEDLVFHTLSGSSEAFERRGYRYQMAVEGRLKRQKHKRDIEEERLRYEAAKVQDEADKREKMDEADLFPGAEVGEETPSPWVDDELEEKKRNKQKENEQYPAEESQAPSPVPAGMIHIPETLSEQERKVQPTLADMFADPSTVAPINAQNIPWKQRDTRVQNPFPYSNQPPVAFEAVGSNDTDAYSTLPHVIVLYVVNPFSYGAEGQSALHMRIALLSFIRAYNSIVGRLPFTKRTQLQLEIIGMESLDDMVKGIPDYLNDSQVPFDILHDYPVRNERPSESGQEAAARSLSVAVYTHPRVFTPEVYKAVSARCMTAFGPGSQLINTVNNIEKINQEAFYQMSKRSKTALNNMDGYMGMMGSHQVETKAHISYRVPSNIVCLAPPPAIYQMDEEGKPILNQLDEQTLFISYCLVGTEYLVATATDSQGKLIDNCIANMKPRRLHNQVYRYKNKTQILDGMGKLWSFILGVMSSDIKNWRLVVGRLGRIGHGEFRAWTHLLNKTSLLRYSSSLKDICGACRSMPSAIGTPAILSACLITLEPEPSIRIMPKFHDIDESIKKNLIFQTPGDLSCTHILTFPVGTEINLEVQDQTADTKGDENWEFGDLDIMEGLDDGDTEIMKDLGLETPSSAAIRQTGGVSMFFSEDSSSIEIQNQPLASGYYISTAPAPELPSWFWATCPSAKRHSPVHLKSSLHINISEVKNDDIAMESAKDKEKEKEEKDIHPLESRQTEEVLRHVLESYNALSWLNLNRQTGDRYSCLPIHVQHLLRLYHSVARLLV</sequence>
<evidence type="ECO:0000250" key="1"/>
<evidence type="ECO:0000255" key="2"/>
<evidence type="ECO:0000256" key="3">
    <source>
        <dbReference type="SAM" id="MobiDB-lite"/>
    </source>
</evidence>
<evidence type="ECO:0000305" key="4"/>
<comment type="function">
    <text evidence="1">Component of the Mediator complex, a coactivator involved in regulated gene transcription of nearly all RNA polymerase II-dependent genes. Mediator functions as a bridge to convey information from gene-specific regulatory proteins to the basal RNA polymerase II transcription machinery. Mediator is recruited to promoters by direct interactions with regulatory proteins and serves as a scaffold for the assembly of a functional preinitiation complex with RNA polymerase II and the general transcription factors (By similarity).</text>
</comment>
<comment type="subunit">
    <text evidence="1">Component of the Mediator complex.</text>
</comment>
<comment type="subcellular location">
    <subcellularLocation>
        <location evidence="1">Nucleus</location>
    </subcellularLocation>
</comment>
<comment type="similarity">
    <text evidence="4">Belongs to the Mediator complex subunit 13 family.</text>
</comment>
<reference key="1">
    <citation type="journal article" date="2003" name="PLoS Biol.">
        <title>The genome sequence of Caenorhabditis briggsae: a platform for comparative genomics.</title>
        <authorList>
            <person name="Stein L.D."/>
            <person name="Bao Z."/>
            <person name="Blasiar D."/>
            <person name="Blumenthal T."/>
            <person name="Brent M.R."/>
            <person name="Chen N."/>
            <person name="Chinwalla A."/>
            <person name="Clarke L."/>
            <person name="Clee C."/>
            <person name="Coghlan A."/>
            <person name="Coulson A."/>
            <person name="D'Eustachio P."/>
            <person name="Fitch D.H.A."/>
            <person name="Fulton L.A."/>
            <person name="Fulton R.E."/>
            <person name="Griffiths-Jones S."/>
            <person name="Harris T.W."/>
            <person name="Hillier L.W."/>
            <person name="Kamath R."/>
            <person name="Kuwabara P.E."/>
            <person name="Mardis E.R."/>
            <person name="Marra M.A."/>
            <person name="Miner T.L."/>
            <person name="Minx P."/>
            <person name="Mullikin J.C."/>
            <person name="Plumb R.W."/>
            <person name="Rogers J."/>
            <person name="Schein J.E."/>
            <person name="Sohrmann M."/>
            <person name="Spieth J."/>
            <person name="Stajich J.E."/>
            <person name="Wei C."/>
            <person name="Willey D."/>
            <person name="Wilson R.K."/>
            <person name="Durbin R.M."/>
            <person name="Waterston R.H."/>
        </authorList>
    </citation>
    <scope>NUCLEOTIDE SEQUENCE [LARGE SCALE GENOMIC DNA]</scope>
    <source>
        <strain>AF16</strain>
    </source>
</reference>
<accession>P0C657</accession>
<accession>A8WSM4</accession>
<feature type="chain" id="PRO_0000314243" description="Mediator of RNA polymerase II transcription subunit 13">
    <location>
        <begin position="1"/>
        <end position="2974"/>
    </location>
</feature>
<feature type="region of interest" description="Disordered" evidence="3">
    <location>
        <begin position="284"/>
        <end position="309"/>
    </location>
</feature>
<feature type="region of interest" description="Disordered" evidence="3">
    <location>
        <begin position="340"/>
        <end position="394"/>
    </location>
</feature>
<feature type="region of interest" description="Disordered" evidence="3">
    <location>
        <begin position="624"/>
        <end position="654"/>
    </location>
</feature>
<feature type="region of interest" description="Disordered" evidence="3">
    <location>
        <begin position="677"/>
        <end position="749"/>
    </location>
</feature>
<feature type="region of interest" description="Disordered" evidence="3">
    <location>
        <begin position="764"/>
        <end position="801"/>
    </location>
</feature>
<feature type="region of interest" description="Disordered" evidence="3">
    <location>
        <begin position="1032"/>
        <end position="1063"/>
    </location>
</feature>
<feature type="region of interest" description="Disordered" evidence="3">
    <location>
        <begin position="1099"/>
        <end position="1134"/>
    </location>
</feature>
<feature type="region of interest" description="Disordered" evidence="3">
    <location>
        <begin position="1140"/>
        <end position="1159"/>
    </location>
</feature>
<feature type="region of interest" description="Disordered" evidence="3">
    <location>
        <begin position="1281"/>
        <end position="1342"/>
    </location>
</feature>
<feature type="region of interest" description="Disordered" evidence="3">
    <location>
        <begin position="1416"/>
        <end position="1486"/>
    </location>
</feature>
<feature type="region of interest" description="Disordered" evidence="3">
    <location>
        <begin position="2052"/>
        <end position="2078"/>
    </location>
</feature>
<feature type="region of interest" description="Disordered" evidence="3">
    <location>
        <begin position="2247"/>
        <end position="2309"/>
    </location>
</feature>
<feature type="region of interest" description="Mediates transcriptional repression" evidence="1">
    <location>
        <begin position="2347"/>
        <end position="2974"/>
    </location>
</feature>
<feature type="coiled-coil region" evidence="2">
    <location>
        <begin position="351"/>
        <end position="396"/>
    </location>
</feature>
<feature type="coiled-coil region" evidence="2">
    <location>
        <begin position="2220"/>
        <end position="2301"/>
    </location>
</feature>
<feature type="compositionally biased region" description="Basic and acidic residues" evidence="3">
    <location>
        <begin position="284"/>
        <end position="299"/>
    </location>
</feature>
<feature type="compositionally biased region" description="Basic and acidic residues" evidence="3">
    <location>
        <begin position="340"/>
        <end position="367"/>
    </location>
</feature>
<feature type="compositionally biased region" description="Basic and acidic residues" evidence="3">
    <location>
        <begin position="374"/>
        <end position="390"/>
    </location>
</feature>
<feature type="compositionally biased region" description="Basic and acidic residues" evidence="3">
    <location>
        <begin position="624"/>
        <end position="633"/>
    </location>
</feature>
<feature type="compositionally biased region" description="Basic residues" evidence="3">
    <location>
        <begin position="634"/>
        <end position="654"/>
    </location>
</feature>
<feature type="compositionally biased region" description="Basic residues" evidence="3">
    <location>
        <begin position="677"/>
        <end position="688"/>
    </location>
</feature>
<feature type="compositionally biased region" description="Basic and acidic residues" evidence="3">
    <location>
        <begin position="689"/>
        <end position="717"/>
    </location>
</feature>
<feature type="compositionally biased region" description="Basic and acidic residues" evidence="3">
    <location>
        <begin position="1035"/>
        <end position="1048"/>
    </location>
</feature>
<feature type="compositionally biased region" description="Polar residues" evidence="3">
    <location>
        <begin position="1122"/>
        <end position="1134"/>
    </location>
</feature>
<feature type="compositionally biased region" description="Polar residues" evidence="3">
    <location>
        <begin position="1140"/>
        <end position="1149"/>
    </location>
</feature>
<feature type="compositionally biased region" description="Pro residues" evidence="3">
    <location>
        <begin position="1284"/>
        <end position="1299"/>
    </location>
</feature>
<feature type="compositionally biased region" description="Pro residues" evidence="3">
    <location>
        <begin position="1326"/>
        <end position="1340"/>
    </location>
</feature>
<feature type="compositionally biased region" description="Polar residues" evidence="3">
    <location>
        <begin position="1443"/>
        <end position="1464"/>
    </location>
</feature>
<feature type="compositionally biased region" description="Low complexity" evidence="3">
    <location>
        <begin position="1473"/>
        <end position="1486"/>
    </location>
</feature>
<feature type="compositionally biased region" description="Polar residues" evidence="3">
    <location>
        <begin position="2064"/>
        <end position="2073"/>
    </location>
</feature>
<feature type="compositionally biased region" description="Basic and acidic residues" evidence="3">
    <location>
        <begin position="2247"/>
        <end position="2258"/>
    </location>
</feature>
<feature type="compositionally biased region" description="Basic and acidic residues" evidence="3">
    <location>
        <begin position="2281"/>
        <end position="2292"/>
    </location>
</feature>
<gene>
    <name type="primary">let-19</name>
    <name type="synonym">mdt-13</name>
    <name type="ORF">CBG03168</name>
</gene>
<keyword id="KW-0010">Activator</keyword>
<keyword id="KW-0175">Coiled coil</keyword>
<keyword id="KW-0539">Nucleus</keyword>
<keyword id="KW-1185">Reference proteome</keyword>
<keyword id="KW-0678">Repressor</keyword>
<keyword id="KW-0804">Transcription</keyword>
<keyword id="KW-0805">Transcription regulation</keyword>
<organism>
    <name type="scientific">Caenorhabditis briggsae</name>
    <dbReference type="NCBI Taxonomy" id="6238"/>
    <lineage>
        <taxon>Eukaryota</taxon>
        <taxon>Metazoa</taxon>
        <taxon>Ecdysozoa</taxon>
        <taxon>Nematoda</taxon>
        <taxon>Chromadorea</taxon>
        <taxon>Rhabditida</taxon>
        <taxon>Rhabditina</taxon>
        <taxon>Rhabditomorpha</taxon>
        <taxon>Rhabditoidea</taxon>
        <taxon>Rhabditidae</taxon>
        <taxon>Peloderinae</taxon>
        <taxon>Caenorhabditis</taxon>
    </lineage>
</organism>
<name>MED13_CAEBR</name>
<proteinExistence type="inferred from homology"/>